<organism>
    <name type="scientific">Salmonella paratyphi A (strain AKU_12601)</name>
    <dbReference type="NCBI Taxonomy" id="554290"/>
    <lineage>
        <taxon>Bacteria</taxon>
        <taxon>Pseudomonadati</taxon>
        <taxon>Pseudomonadota</taxon>
        <taxon>Gammaproteobacteria</taxon>
        <taxon>Enterobacterales</taxon>
        <taxon>Enterobacteriaceae</taxon>
        <taxon>Salmonella</taxon>
    </lineage>
</organism>
<comment type="subcellular location">
    <subcellularLocation>
        <location evidence="1">Cytoplasm</location>
        <location evidence="1">Nucleoid</location>
    </subcellularLocation>
</comment>
<comment type="similarity">
    <text evidence="1">Belongs to the YejK family.</text>
</comment>
<dbReference type="EMBL" id="FM200053">
    <property type="protein sequence ID" value="CAR58714.1"/>
    <property type="molecule type" value="Genomic_DNA"/>
</dbReference>
<dbReference type="RefSeq" id="WP_000050806.1">
    <property type="nucleotide sequence ID" value="NC_011147.1"/>
</dbReference>
<dbReference type="SMR" id="B5BE10"/>
<dbReference type="KEGG" id="sek:SSPA0585"/>
<dbReference type="HOGENOM" id="CLU_063050_0_1_6"/>
<dbReference type="Proteomes" id="UP000001869">
    <property type="component" value="Chromosome"/>
</dbReference>
<dbReference type="GO" id="GO:0043590">
    <property type="term" value="C:bacterial nucleoid"/>
    <property type="evidence" value="ECO:0007669"/>
    <property type="project" value="TreeGrafter"/>
</dbReference>
<dbReference type="GO" id="GO:0005737">
    <property type="term" value="C:cytoplasm"/>
    <property type="evidence" value="ECO:0007669"/>
    <property type="project" value="UniProtKB-UniRule"/>
</dbReference>
<dbReference type="GO" id="GO:0003690">
    <property type="term" value="F:double-stranded DNA binding"/>
    <property type="evidence" value="ECO:0007669"/>
    <property type="project" value="TreeGrafter"/>
</dbReference>
<dbReference type="GO" id="GO:0003727">
    <property type="term" value="F:single-stranded RNA binding"/>
    <property type="evidence" value="ECO:0007669"/>
    <property type="project" value="TreeGrafter"/>
</dbReference>
<dbReference type="HAMAP" id="MF_00730">
    <property type="entry name" value="NdpA"/>
    <property type="match status" value="1"/>
</dbReference>
<dbReference type="InterPro" id="IPR007358">
    <property type="entry name" value="Nucleoid_associated_NdpA"/>
</dbReference>
<dbReference type="NCBIfam" id="NF001557">
    <property type="entry name" value="PRK00378.1"/>
    <property type="match status" value="1"/>
</dbReference>
<dbReference type="PANTHER" id="PTHR38772">
    <property type="match status" value="1"/>
</dbReference>
<dbReference type="PANTHER" id="PTHR38772:SF1">
    <property type="entry name" value="NUCLEOID-ASSOCIATED PROTEIN YEJK"/>
    <property type="match status" value="1"/>
</dbReference>
<dbReference type="Pfam" id="PF04245">
    <property type="entry name" value="NA37"/>
    <property type="match status" value="1"/>
</dbReference>
<proteinExistence type="inferred from homology"/>
<keyword id="KW-0963">Cytoplasm</keyword>
<accession>B5BE10</accession>
<gene>
    <name evidence="1" type="primary">yejK</name>
    <name type="ordered locus">SSPA0585</name>
</gene>
<name>NDPA_SALPK</name>
<protein>
    <recommendedName>
        <fullName evidence="1">Nucleoid-associated protein YejK</fullName>
    </recommendedName>
</protein>
<feature type="chain" id="PRO_1000132733" description="Nucleoid-associated protein YejK">
    <location>
        <begin position="1"/>
        <end position="335"/>
    </location>
</feature>
<evidence type="ECO:0000255" key="1">
    <source>
        <dbReference type="HAMAP-Rule" id="MF_00730"/>
    </source>
</evidence>
<reference key="1">
    <citation type="journal article" date="2009" name="BMC Genomics">
        <title>Pseudogene accumulation in the evolutionary histories of Salmonella enterica serovars Paratyphi A and Typhi.</title>
        <authorList>
            <person name="Holt K.E."/>
            <person name="Thomson N.R."/>
            <person name="Wain J."/>
            <person name="Langridge G.C."/>
            <person name="Hasan R."/>
            <person name="Bhutta Z.A."/>
            <person name="Quail M.A."/>
            <person name="Norbertczak H."/>
            <person name="Walker D."/>
            <person name="Simmonds M."/>
            <person name="White B."/>
            <person name="Bason N."/>
            <person name="Mungall K."/>
            <person name="Dougan G."/>
            <person name="Parkhill J."/>
        </authorList>
    </citation>
    <scope>NUCLEOTIDE SEQUENCE [LARGE SCALE GENOMIC DNA]</scope>
    <source>
        <strain>AKU_12601</strain>
    </source>
</reference>
<sequence>MSLDINQIALHQLIKRDEQNLELVLRDSLLEPTTTVVEMVAELHRVYSAKNKAYGLFNEESELAQALRLQRQGEEDFLAFSRAATGRLRDELAKYPFADGGIVLFCHYRYLAVEYLLVTVLNNLSSMRVNENLDINPTHYLDINHADIVARIDLTEWETNPQSTRYLTFLKGRVGRKVADFFMDFLGASEGLNAKAQNRGLLQAVDDFTAEAQLDKAERQNVRQQVYSYCNEQLQAGEEIELESLSKELSGVSEVSFSEFTAEKGYELEESFPADRSTLRQLTKYAGSGGGLTINFDAMLLGERIFWDPATDTLTIKGTPPNLRDQLQRRTSGGK</sequence>